<gene>
    <name evidence="1" type="primary">rnhA</name>
    <name type="ordered locus">Sputw3181_2246</name>
</gene>
<comment type="function">
    <text evidence="1">Endonuclease that specifically degrades the RNA of RNA-DNA hybrids.</text>
</comment>
<comment type="catalytic activity">
    <reaction evidence="1">
        <text>Endonucleolytic cleavage to 5'-phosphomonoester.</text>
        <dbReference type="EC" id="3.1.26.4"/>
    </reaction>
</comment>
<comment type="cofactor">
    <cofactor evidence="1">
        <name>Mg(2+)</name>
        <dbReference type="ChEBI" id="CHEBI:18420"/>
    </cofactor>
    <text evidence="1">Binds 1 Mg(2+) ion per subunit. May bind a second metal ion at a regulatory site, or after substrate binding.</text>
</comment>
<comment type="subunit">
    <text evidence="1">Monomer.</text>
</comment>
<comment type="subcellular location">
    <subcellularLocation>
        <location evidence="1">Cytoplasm</location>
    </subcellularLocation>
</comment>
<comment type="similarity">
    <text evidence="1">Belongs to the RNase H family.</text>
</comment>
<protein>
    <recommendedName>
        <fullName evidence="1">Ribonuclease H</fullName>
        <shortName evidence="1">RNase H</shortName>
        <ecNumber evidence="1">3.1.26.4</ecNumber>
    </recommendedName>
</protein>
<name>RNH_SHESW</name>
<organism>
    <name type="scientific">Shewanella sp. (strain W3-18-1)</name>
    <dbReference type="NCBI Taxonomy" id="351745"/>
    <lineage>
        <taxon>Bacteria</taxon>
        <taxon>Pseudomonadati</taxon>
        <taxon>Pseudomonadota</taxon>
        <taxon>Gammaproteobacteria</taxon>
        <taxon>Alteromonadales</taxon>
        <taxon>Shewanellaceae</taxon>
        <taxon>Shewanella</taxon>
    </lineage>
</organism>
<proteinExistence type="inferred from homology"/>
<keyword id="KW-0963">Cytoplasm</keyword>
<keyword id="KW-0255">Endonuclease</keyword>
<keyword id="KW-0378">Hydrolase</keyword>
<keyword id="KW-0460">Magnesium</keyword>
<keyword id="KW-0479">Metal-binding</keyword>
<keyword id="KW-0540">Nuclease</keyword>
<evidence type="ECO:0000255" key="1">
    <source>
        <dbReference type="HAMAP-Rule" id="MF_00042"/>
    </source>
</evidence>
<evidence type="ECO:0000255" key="2">
    <source>
        <dbReference type="PROSITE-ProRule" id="PRU00408"/>
    </source>
</evidence>
<dbReference type="EC" id="3.1.26.4" evidence="1"/>
<dbReference type="EMBL" id="CP000503">
    <property type="protein sequence ID" value="ABM25070.1"/>
    <property type="molecule type" value="Genomic_DNA"/>
</dbReference>
<dbReference type="RefSeq" id="WP_011789536.1">
    <property type="nucleotide sequence ID" value="NC_008750.1"/>
</dbReference>
<dbReference type="SMR" id="A1RK75"/>
<dbReference type="GeneID" id="67443315"/>
<dbReference type="KEGG" id="shw:Sputw3181_2246"/>
<dbReference type="HOGENOM" id="CLU_030894_6_0_6"/>
<dbReference type="Proteomes" id="UP000002597">
    <property type="component" value="Chromosome"/>
</dbReference>
<dbReference type="GO" id="GO:0005737">
    <property type="term" value="C:cytoplasm"/>
    <property type="evidence" value="ECO:0007669"/>
    <property type="project" value="UniProtKB-SubCell"/>
</dbReference>
<dbReference type="GO" id="GO:0000287">
    <property type="term" value="F:magnesium ion binding"/>
    <property type="evidence" value="ECO:0007669"/>
    <property type="project" value="UniProtKB-UniRule"/>
</dbReference>
<dbReference type="GO" id="GO:0003676">
    <property type="term" value="F:nucleic acid binding"/>
    <property type="evidence" value="ECO:0007669"/>
    <property type="project" value="InterPro"/>
</dbReference>
<dbReference type="GO" id="GO:0004523">
    <property type="term" value="F:RNA-DNA hybrid ribonuclease activity"/>
    <property type="evidence" value="ECO:0007669"/>
    <property type="project" value="UniProtKB-UniRule"/>
</dbReference>
<dbReference type="GO" id="GO:0043137">
    <property type="term" value="P:DNA replication, removal of RNA primer"/>
    <property type="evidence" value="ECO:0007669"/>
    <property type="project" value="TreeGrafter"/>
</dbReference>
<dbReference type="CDD" id="cd09278">
    <property type="entry name" value="RNase_HI_prokaryote_like"/>
    <property type="match status" value="1"/>
</dbReference>
<dbReference type="FunFam" id="3.30.420.10:FF:000008">
    <property type="entry name" value="Ribonuclease H"/>
    <property type="match status" value="1"/>
</dbReference>
<dbReference type="Gene3D" id="3.30.420.10">
    <property type="entry name" value="Ribonuclease H-like superfamily/Ribonuclease H"/>
    <property type="match status" value="1"/>
</dbReference>
<dbReference type="HAMAP" id="MF_00042">
    <property type="entry name" value="RNase_H"/>
    <property type="match status" value="1"/>
</dbReference>
<dbReference type="InterPro" id="IPR050092">
    <property type="entry name" value="RNase_H"/>
</dbReference>
<dbReference type="InterPro" id="IPR012337">
    <property type="entry name" value="RNaseH-like_sf"/>
</dbReference>
<dbReference type="InterPro" id="IPR002156">
    <property type="entry name" value="RNaseH_domain"/>
</dbReference>
<dbReference type="InterPro" id="IPR036397">
    <property type="entry name" value="RNaseH_sf"/>
</dbReference>
<dbReference type="InterPro" id="IPR022892">
    <property type="entry name" value="RNaseHI"/>
</dbReference>
<dbReference type="NCBIfam" id="NF001236">
    <property type="entry name" value="PRK00203.1"/>
    <property type="match status" value="1"/>
</dbReference>
<dbReference type="PANTHER" id="PTHR10642">
    <property type="entry name" value="RIBONUCLEASE H1"/>
    <property type="match status" value="1"/>
</dbReference>
<dbReference type="PANTHER" id="PTHR10642:SF26">
    <property type="entry name" value="RIBONUCLEASE H1"/>
    <property type="match status" value="1"/>
</dbReference>
<dbReference type="Pfam" id="PF00075">
    <property type="entry name" value="RNase_H"/>
    <property type="match status" value="1"/>
</dbReference>
<dbReference type="SUPFAM" id="SSF53098">
    <property type="entry name" value="Ribonuclease H-like"/>
    <property type="match status" value="1"/>
</dbReference>
<dbReference type="PROSITE" id="PS50879">
    <property type="entry name" value="RNASE_H_1"/>
    <property type="match status" value="1"/>
</dbReference>
<sequence length="156" mass="17685">MTERKLIHIFTDGSCLGNPGPGGYGIVMNYKGHTKEMSDGFALTTNNRMELLAPIIALESLKEPCRVVLTSDSQYMRQGIMTWIHGWKKKGWMTSNRTPVKNVDLWKRLDKVSQMHTIDWQWVKGHAGHAENERCDILARSAAEANPTQIDEGYQP</sequence>
<reference key="1">
    <citation type="submission" date="2006-12" db="EMBL/GenBank/DDBJ databases">
        <title>Complete sequence of Shewanella sp. W3-18-1.</title>
        <authorList>
            <consortium name="US DOE Joint Genome Institute"/>
            <person name="Copeland A."/>
            <person name="Lucas S."/>
            <person name="Lapidus A."/>
            <person name="Barry K."/>
            <person name="Detter J.C."/>
            <person name="Glavina del Rio T."/>
            <person name="Hammon N."/>
            <person name="Israni S."/>
            <person name="Dalin E."/>
            <person name="Tice H."/>
            <person name="Pitluck S."/>
            <person name="Chain P."/>
            <person name="Malfatti S."/>
            <person name="Shin M."/>
            <person name="Vergez L."/>
            <person name="Schmutz J."/>
            <person name="Larimer F."/>
            <person name="Land M."/>
            <person name="Hauser L."/>
            <person name="Kyrpides N."/>
            <person name="Lykidis A."/>
            <person name="Tiedje J."/>
            <person name="Richardson P."/>
        </authorList>
    </citation>
    <scope>NUCLEOTIDE SEQUENCE [LARGE SCALE GENOMIC DNA]</scope>
    <source>
        <strain>W3-18-1</strain>
    </source>
</reference>
<accession>A1RK75</accession>
<feature type="chain" id="PRO_1000074676" description="Ribonuclease H">
    <location>
        <begin position="1"/>
        <end position="156"/>
    </location>
</feature>
<feature type="domain" description="RNase H type-1" evidence="2">
    <location>
        <begin position="3"/>
        <end position="144"/>
    </location>
</feature>
<feature type="binding site" evidence="1">
    <location>
        <position position="12"/>
    </location>
    <ligand>
        <name>Mg(2+)</name>
        <dbReference type="ChEBI" id="CHEBI:18420"/>
        <label>1</label>
    </ligand>
</feature>
<feature type="binding site" evidence="1">
    <location>
        <position position="12"/>
    </location>
    <ligand>
        <name>Mg(2+)</name>
        <dbReference type="ChEBI" id="CHEBI:18420"/>
        <label>2</label>
    </ligand>
</feature>
<feature type="binding site" evidence="1">
    <location>
        <position position="50"/>
    </location>
    <ligand>
        <name>Mg(2+)</name>
        <dbReference type="ChEBI" id="CHEBI:18420"/>
        <label>1</label>
    </ligand>
</feature>
<feature type="binding site" evidence="1">
    <location>
        <position position="72"/>
    </location>
    <ligand>
        <name>Mg(2+)</name>
        <dbReference type="ChEBI" id="CHEBI:18420"/>
        <label>1</label>
    </ligand>
</feature>
<feature type="binding site" evidence="1">
    <location>
        <position position="136"/>
    </location>
    <ligand>
        <name>Mg(2+)</name>
        <dbReference type="ChEBI" id="CHEBI:18420"/>
        <label>2</label>
    </ligand>
</feature>